<name>MU145_SCHPO</name>
<keyword id="KW-0469">Meiosis</keyword>
<keyword id="KW-0472">Membrane</keyword>
<keyword id="KW-0479">Metal-binding</keyword>
<keyword id="KW-1185">Reference proteome</keyword>
<keyword id="KW-0812">Transmembrane</keyword>
<keyword id="KW-1133">Transmembrane helix</keyword>
<keyword id="KW-0862">Zinc</keyword>
<keyword id="KW-0863">Zinc-finger</keyword>
<proteinExistence type="evidence at protein level"/>
<accession>P87119</accession>
<feature type="chain" id="PRO_0000280180" description="RING finger protein mug145">
    <location>
        <begin position="1"/>
        <end position="309"/>
    </location>
</feature>
<feature type="transmembrane region" description="Helical" evidence="1">
    <location>
        <begin position="23"/>
        <end position="43"/>
    </location>
</feature>
<feature type="zinc finger region" description="RING-type; atypical" evidence="2">
    <location>
        <begin position="205"/>
        <end position="247"/>
    </location>
</feature>
<gene>
    <name type="primary">mug145</name>
    <name type="synonym">meu34</name>
    <name type="ORF">SPAC3A12.03c</name>
</gene>
<evidence type="ECO:0000255" key="1"/>
<evidence type="ECO:0000255" key="2">
    <source>
        <dbReference type="PROSITE-ProRule" id="PRU00175"/>
    </source>
</evidence>
<evidence type="ECO:0000269" key="3">
    <source>
    </source>
</evidence>
<evidence type="ECO:0000305" key="4"/>
<sequence length="309" mass="35059">MPIPKNRPMHVEEEVSSQTNTEILLFALVIILSVIFINFFFFYLCRCCVYFYHTLENQEGDDERPLIQHHMVNRSTGSLSPSVDRLGNVLGYDIPSRRRRSVVSKEALSCISLEIPYIKWLKKRKGHAKGESTFLDNRSENQSVIVQGQGETPSVIITYDVRRPNLGSTSFVEMSSALSNIYNTDASDGDSSDDSCLLEDEEDFCIICYADYAFDDILRVLPCEHVFHTQCIDTWMTTMKASCPLCNEDYYKYFLQMDAASSVTHENAAWSIPLSPGDSRTHSAETDRSLLSAMSVRNSRMPYIVSSTL</sequence>
<comment type="function">
    <text evidence="3">Has a role in meiosis.</text>
</comment>
<comment type="subcellular location">
    <subcellularLocation>
        <location evidence="4">Membrane</location>
        <topology evidence="4">Single-pass membrane protein</topology>
    </subcellularLocation>
</comment>
<reference key="1">
    <citation type="submission" date="2005-10" db="EMBL/GenBank/DDBJ databases">
        <title>Meiotic expression upregulated.</title>
        <authorList>
            <person name="Saito T.T."/>
            <person name="Nojima H."/>
        </authorList>
    </citation>
    <scope>NUCLEOTIDE SEQUENCE [GENOMIC DNA]</scope>
</reference>
<reference key="2">
    <citation type="journal article" date="2002" name="Nature">
        <title>The genome sequence of Schizosaccharomyces pombe.</title>
        <authorList>
            <person name="Wood V."/>
            <person name="Gwilliam R."/>
            <person name="Rajandream M.A."/>
            <person name="Lyne M.H."/>
            <person name="Lyne R."/>
            <person name="Stewart A."/>
            <person name="Sgouros J.G."/>
            <person name="Peat N."/>
            <person name="Hayles J."/>
            <person name="Baker S.G."/>
            <person name="Basham D."/>
            <person name="Bowman S."/>
            <person name="Brooks K."/>
            <person name="Brown D."/>
            <person name="Brown S."/>
            <person name="Chillingworth T."/>
            <person name="Churcher C.M."/>
            <person name="Collins M."/>
            <person name="Connor R."/>
            <person name="Cronin A."/>
            <person name="Davis P."/>
            <person name="Feltwell T."/>
            <person name="Fraser A."/>
            <person name="Gentles S."/>
            <person name="Goble A."/>
            <person name="Hamlin N."/>
            <person name="Harris D.E."/>
            <person name="Hidalgo J."/>
            <person name="Hodgson G."/>
            <person name="Holroyd S."/>
            <person name="Hornsby T."/>
            <person name="Howarth S."/>
            <person name="Huckle E.J."/>
            <person name="Hunt S."/>
            <person name="Jagels K."/>
            <person name="James K.D."/>
            <person name="Jones L."/>
            <person name="Jones M."/>
            <person name="Leather S."/>
            <person name="McDonald S."/>
            <person name="McLean J."/>
            <person name="Mooney P."/>
            <person name="Moule S."/>
            <person name="Mungall K.L."/>
            <person name="Murphy L.D."/>
            <person name="Niblett D."/>
            <person name="Odell C."/>
            <person name="Oliver K."/>
            <person name="O'Neil S."/>
            <person name="Pearson D."/>
            <person name="Quail M.A."/>
            <person name="Rabbinowitsch E."/>
            <person name="Rutherford K.M."/>
            <person name="Rutter S."/>
            <person name="Saunders D."/>
            <person name="Seeger K."/>
            <person name="Sharp S."/>
            <person name="Skelton J."/>
            <person name="Simmonds M.N."/>
            <person name="Squares R."/>
            <person name="Squares S."/>
            <person name="Stevens K."/>
            <person name="Taylor K."/>
            <person name="Taylor R.G."/>
            <person name="Tivey A."/>
            <person name="Walsh S.V."/>
            <person name="Warren T."/>
            <person name="Whitehead S."/>
            <person name="Woodward J.R."/>
            <person name="Volckaert G."/>
            <person name="Aert R."/>
            <person name="Robben J."/>
            <person name="Grymonprez B."/>
            <person name="Weltjens I."/>
            <person name="Vanstreels E."/>
            <person name="Rieger M."/>
            <person name="Schaefer M."/>
            <person name="Mueller-Auer S."/>
            <person name="Gabel C."/>
            <person name="Fuchs M."/>
            <person name="Duesterhoeft A."/>
            <person name="Fritzc C."/>
            <person name="Holzer E."/>
            <person name="Moestl D."/>
            <person name="Hilbert H."/>
            <person name="Borzym K."/>
            <person name="Langer I."/>
            <person name="Beck A."/>
            <person name="Lehrach H."/>
            <person name="Reinhardt R."/>
            <person name="Pohl T.M."/>
            <person name="Eger P."/>
            <person name="Zimmermann W."/>
            <person name="Wedler H."/>
            <person name="Wambutt R."/>
            <person name="Purnelle B."/>
            <person name="Goffeau A."/>
            <person name="Cadieu E."/>
            <person name="Dreano S."/>
            <person name="Gloux S."/>
            <person name="Lelaure V."/>
            <person name="Mottier S."/>
            <person name="Galibert F."/>
            <person name="Aves S.J."/>
            <person name="Xiang Z."/>
            <person name="Hunt C."/>
            <person name="Moore K."/>
            <person name="Hurst S.M."/>
            <person name="Lucas M."/>
            <person name="Rochet M."/>
            <person name="Gaillardin C."/>
            <person name="Tallada V.A."/>
            <person name="Garzon A."/>
            <person name="Thode G."/>
            <person name="Daga R.R."/>
            <person name="Cruzado L."/>
            <person name="Jimenez J."/>
            <person name="Sanchez M."/>
            <person name="del Rey F."/>
            <person name="Benito J."/>
            <person name="Dominguez A."/>
            <person name="Revuelta J.L."/>
            <person name="Moreno S."/>
            <person name="Armstrong J."/>
            <person name="Forsburg S.L."/>
            <person name="Cerutti L."/>
            <person name="Lowe T."/>
            <person name="McCombie W.R."/>
            <person name="Paulsen I."/>
            <person name="Potashkin J."/>
            <person name="Shpakovski G.V."/>
            <person name="Ussery D."/>
            <person name="Barrell B.G."/>
            <person name="Nurse P."/>
        </authorList>
    </citation>
    <scope>NUCLEOTIDE SEQUENCE [LARGE SCALE GENOMIC DNA]</scope>
    <source>
        <strain>972 / ATCC 24843</strain>
    </source>
</reference>
<reference key="3">
    <citation type="journal article" date="2005" name="Curr. Biol.">
        <title>A large-scale screen in S. pombe identifies seven novel genes required for critical meiotic events.</title>
        <authorList>
            <person name="Martin-Castellanos C."/>
            <person name="Blanco M."/>
            <person name="Rozalen A.E."/>
            <person name="Perez-Hidalgo L."/>
            <person name="Garcia A.I."/>
            <person name="Conde F."/>
            <person name="Mata J."/>
            <person name="Ellermeier C."/>
            <person name="Davis L."/>
            <person name="San-Segundo P."/>
            <person name="Smith G.R."/>
            <person name="Moreno S."/>
        </authorList>
    </citation>
    <scope>FUNCTION IN MEIOSIS</scope>
</reference>
<organism>
    <name type="scientific">Schizosaccharomyces pombe (strain 972 / ATCC 24843)</name>
    <name type="common">Fission yeast</name>
    <dbReference type="NCBI Taxonomy" id="284812"/>
    <lineage>
        <taxon>Eukaryota</taxon>
        <taxon>Fungi</taxon>
        <taxon>Dikarya</taxon>
        <taxon>Ascomycota</taxon>
        <taxon>Taphrinomycotina</taxon>
        <taxon>Schizosaccharomycetes</taxon>
        <taxon>Schizosaccharomycetales</taxon>
        <taxon>Schizosaccharomycetaceae</taxon>
        <taxon>Schizosaccharomyces</taxon>
    </lineage>
</organism>
<protein>
    <recommendedName>
        <fullName>RING finger protein mug145</fullName>
    </recommendedName>
    <alternativeName>
        <fullName>Meiotic expression up-regulated protein 34</fullName>
    </alternativeName>
    <alternativeName>
        <fullName>Meiotically up-regulated gene 145 protein</fullName>
    </alternativeName>
</protein>
<dbReference type="EMBL" id="AB237170">
    <property type="protein sequence ID" value="BAE46410.1"/>
    <property type="molecule type" value="Genomic_DNA"/>
</dbReference>
<dbReference type="EMBL" id="CU329670">
    <property type="protein sequence ID" value="CAB08748.1"/>
    <property type="molecule type" value="Genomic_DNA"/>
</dbReference>
<dbReference type="PIR" id="T38671">
    <property type="entry name" value="T38671"/>
</dbReference>
<dbReference type="RefSeq" id="NP_593329.1">
    <property type="nucleotide sequence ID" value="NM_001018760.2"/>
</dbReference>
<dbReference type="SMR" id="P87119"/>
<dbReference type="BioGRID" id="279471">
    <property type="interactions" value="7"/>
</dbReference>
<dbReference type="FunCoup" id="P87119">
    <property type="interactions" value="419"/>
</dbReference>
<dbReference type="STRING" id="284812.P87119"/>
<dbReference type="PaxDb" id="4896-SPAC3A12.03c.1"/>
<dbReference type="EnsemblFungi" id="SPAC3A12.03c.1">
    <property type="protein sequence ID" value="SPAC3A12.03c.1:pep"/>
    <property type="gene ID" value="SPAC3A12.03c"/>
</dbReference>
<dbReference type="GeneID" id="2543036"/>
<dbReference type="KEGG" id="spo:2543036"/>
<dbReference type="PomBase" id="SPAC3A12.03c"/>
<dbReference type="VEuPathDB" id="FungiDB:SPAC3A12.03c"/>
<dbReference type="eggNOG" id="KOG0800">
    <property type="taxonomic scope" value="Eukaryota"/>
</dbReference>
<dbReference type="HOGENOM" id="CLU_912634_0_0_1"/>
<dbReference type="InParanoid" id="P87119"/>
<dbReference type="OMA" id="PLCNEDY"/>
<dbReference type="PRO" id="PR:P87119"/>
<dbReference type="Proteomes" id="UP000002485">
    <property type="component" value="Chromosome I"/>
</dbReference>
<dbReference type="GO" id="GO:0005737">
    <property type="term" value="C:cytoplasm"/>
    <property type="evidence" value="ECO:0000318"/>
    <property type="project" value="GO_Central"/>
</dbReference>
<dbReference type="GO" id="GO:0005789">
    <property type="term" value="C:endoplasmic reticulum membrane"/>
    <property type="evidence" value="ECO:0000250"/>
    <property type="project" value="PomBase"/>
</dbReference>
<dbReference type="GO" id="GO:0061630">
    <property type="term" value="F:ubiquitin protein ligase activity"/>
    <property type="evidence" value="ECO:0000318"/>
    <property type="project" value="GO_Central"/>
</dbReference>
<dbReference type="GO" id="GO:0008270">
    <property type="term" value="F:zinc ion binding"/>
    <property type="evidence" value="ECO:0000255"/>
    <property type="project" value="PomBase"/>
</dbReference>
<dbReference type="GO" id="GO:0051321">
    <property type="term" value="P:meiotic cell cycle"/>
    <property type="evidence" value="ECO:0007669"/>
    <property type="project" value="UniProtKB-KW"/>
</dbReference>
<dbReference type="GO" id="GO:0006511">
    <property type="term" value="P:ubiquitin-dependent protein catabolic process"/>
    <property type="evidence" value="ECO:0000318"/>
    <property type="project" value="GO_Central"/>
</dbReference>
<dbReference type="CDD" id="cd16468">
    <property type="entry name" value="RING-H2_RNF11"/>
    <property type="match status" value="1"/>
</dbReference>
<dbReference type="Gene3D" id="3.30.40.10">
    <property type="entry name" value="Zinc/RING finger domain, C3HC4 (zinc finger)"/>
    <property type="match status" value="1"/>
</dbReference>
<dbReference type="InterPro" id="IPR051653">
    <property type="entry name" value="E3_ligase_sorting_rcpt"/>
</dbReference>
<dbReference type="InterPro" id="IPR042981">
    <property type="entry name" value="RNF11_RING-H2"/>
</dbReference>
<dbReference type="InterPro" id="IPR001841">
    <property type="entry name" value="Znf_RING"/>
</dbReference>
<dbReference type="InterPro" id="IPR011016">
    <property type="entry name" value="Znf_RING-CH"/>
</dbReference>
<dbReference type="InterPro" id="IPR013083">
    <property type="entry name" value="Znf_RING/FYVE/PHD"/>
</dbReference>
<dbReference type="PANTHER" id="PTHR47168:SF1">
    <property type="entry name" value="OS02G0798600 PROTEIN"/>
    <property type="match status" value="1"/>
</dbReference>
<dbReference type="PANTHER" id="PTHR47168">
    <property type="entry name" value="RING ZINC FINGER DOMAIN SUPERFAMILY PROTEIN-RELATED"/>
    <property type="match status" value="1"/>
</dbReference>
<dbReference type="Pfam" id="PF13639">
    <property type="entry name" value="zf-RING_2"/>
    <property type="match status" value="1"/>
</dbReference>
<dbReference type="SMART" id="SM00184">
    <property type="entry name" value="RING"/>
    <property type="match status" value="1"/>
</dbReference>
<dbReference type="SMART" id="SM00744">
    <property type="entry name" value="RINGv"/>
    <property type="match status" value="1"/>
</dbReference>
<dbReference type="SUPFAM" id="SSF57850">
    <property type="entry name" value="RING/U-box"/>
    <property type="match status" value="1"/>
</dbReference>
<dbReference type="PROSITE" id="PS50089">
    <property type="entry name" value="ZF_RING_2"/>
    <property type="match status" value="1"/>
</dbReference>